<sequence length="100" mass="11580">MLNSNNHQTEWKWPRLIQIMEIGNSAMKNTMSKTLYMSYNFIARTSGKTYHAPVLVVDCSVNEGWLWMRICHNCLGCLCTGYWAAQRTFATTTGLRLVWL</sequence>
<dbReference type="EMBL" id="U00089">
    <property type="protein sequence ID" value="AAB95912.1"/>
    <property type="molecule type" value="Genomic_DNA"/>
</dbReference>
<dbReference type="PIR" id="S73590">
    <property type="entry name" value="S73590"/>
</dbReference>
<dbReference type="RefSeq" id="NP_110267.1">
    <property type="nucleotide sequence ID" value="NC_000912.1"/>
</dbReference>
<dbReference type="EnsemblBacteria" id="AAB95912">
    <property type="protein sequence ID" value="AAB95912"/>
    <property type="gene ID" value="MPN_578"/>
</dbReference>
<dbReference type="KEGG" id="mpn:MPN_578"/>
<dbReference type="HOGENOM" id="CLU_2302790_0_0_14"/>
<dbReference type="BioCyc" id="MPNE272634:G1GJ3-943-MONOMER"/>
<dbReference type="Proteomes" id="UP000000808">
    <property type="component" value="Chromosome"/>
</dbReference>
<reference key="1">
    <citation type="journal article" date="1996" name="Nucleic Acids Res.">
        <title>Complete sequence analysis of the genome of the bacterium Mycoplasma pneumoniae.</title>
        <authorList>
            <person name="Himmelreich R."/>
            <person name="Hilbert H."/>
            <person name="Plagens H."/>
            <person name="Pirkl E."/>
            <person name="Li B.-C."/>
            <person name="Herrmann R."/>
        </authorList>
    </citation>
    <scope>NUCLEOTIDE SEQUENCE [LARGE SCALE GENOMIC DNA]</scope>
    <source>
        <strain>ATCC 29342 / M129 / Subtype 1</strain>
    </source>
</reference>
<keyword id="KW-1185">Reference proteome</keyword>
<name>Y578_MYCPN</name>
<gene>
    <name type="ordered locus">MPN_578</name>
    <name type="ORF">D02_orf100</name>
    <name type="ORF">MP264</name>
</gene>
<protein>
    <recommendedName>
        <fullName>Uncharacterized protein MPN_578</fullName>
    </recommendedName>
</protein>
<feature type="chain" id="PRO_0000210695" description="Uncharacterized protein MPN_578">
    <location>
        <begin position="1"/>
        <end position="100"/>
    </location>
</feature>
<organism>
    <name type="scientific">Mycoplasma pneumoniae (strain ATCC 29342 / M129 / Subtype 1)</name>
    <name type="common">Mycoplasmoides pneumoniae</name>
    <dbReference type="NCBI Taxonomy" id="272634"/>
    <lineage>
        <taxon>Bacteria</taxon>
        <taxon>Bacillati</taxon>
        <taxon>Mycoplasmatota</taxon>
        <taxon>Mycoplasmoidales</taxon>
        <taxon>Mycoplasmoidaceae</taxon>
        <taxon>Mycoplasmoides</taxon>
    </lineage>
</organism>
<proteinExistence type="predicted"/>
<accession>P75202</accession>